<dbReference type="EC" id="2.7.7.7"/>
<dbReference type="EMBL" id="AJ004834">
    <property type="protein sequence ID" value="CAB81809.1"/>
    <property type="molecule type" value="Genomic_DNA"/>
</dbReference>
<dbReference type="EMBL" id="AJ250335">
    <property type="protein sequence ID" value="CAC12849.1"/>
    <property type="molecule type" value="Genomic_DNA"/>
</dbReference>
<dbReference type="SMR" id="Q9HH06"/>
<dbReference type="GO" id="GO:0003677">
    <property type="term" value="F:DNA binding"/>
    <property type="evidence" value="ECO:0007669"/>
    <property type="project" value="UniProtKB-KW"/>
</dbReference>
<dbReference type="GO" id="GO:0003887">
    <property type="term" value="F:DNA-directed DNA polymerase activity"/>
    <property type="evidence" value="ECO:0007669"/>
    <property type="project" value="UniProtKB-KW"/>
</dbReference>
<dbReference type="GO" id="GO:0004519">
    <property type="term" value="F:endonuclease activity"/>
    <property type="evidence" value="ECO:0007669"/>
    <property type="project" value="UniProtKB-KW"/>
</dbReference>
<dbReference type="GO" id="GO:0000166">
    <property type="term" value="F:nucleotide binding"/>
    <property type="evidence" value="ECO:0007669"/>
    <property type="project" value="InterPro"/>
</dbReference>
<dbReference type="GO" id="GO:0006261">
    <property type="term" value="P:DNA-templated DNA replication"/>
    <property type="evidence" value="ECO:0007669"/>
    <property type="project" value="TreeGrafter"/>
</dbReference>
<dbReference type="CDD" id="cd05780">
    <property type="entry name" value="DNA_polB_Kod1_like_exo"/>
    <property type="match status" value="1"/>
</dbReference>
<dbReference type="CDD" id="cd05536">
    <property type="entry name" value="POLBc_B3"/>
    <property type="match status" value="1"/>
</dbReference>
<dbReference type="FunFam" id="3.30.342.10:FF:000015">
    <property type="entry name" value="DNA polymerase"/>
    <property type="match status" value="1"/>
</dbReference>
<dbReference type="FunFam" id="1.10.132.60:FF:000013">
    <property type="entry name" value="DNA polymerase Pol2"/>
    <property type="match status" value="1"/>
</dbReference>
<dbReference type="Gene3D" id="1.10.132.60">
    <property type="entry name" value="DNA polymerase family B, C-terminal domain"/>
    <property type="match status" value="1"/>
</dbReference>
<dbReference type="Gene3D" id="3.30.342.10">
    <property type="entry name" value="DNA Polymerase, chain B, domain 1"/>
    <property type="match status" value="1"/>
</dbReference>
<dbReference type="Gene3D" id="1.10.287.690">
    <property type="entry name" value="Helix hairpin bin"/>
    <property type="match status" value="1"/>
</dbReference>
<dbReference type="Gene3D" id="3.90.1600.10">
    <property type="entry name" value="Palm domain of DNA polymerase"/>
    <property type="match status" value="1"/>
</dbReference>
<dbReference type="Gene3D" id="3.30.420.10">
    <property type="entry name" value="Ribonuclease H-like superfamily/Ribonuclease H"/>
    <property type="match status" value="1"/>
</dbReference>
<dbReference type="InterPro" id="IPR006172">
    <property type="entry name" value="DNA-dir_DNA_pol_B"/>
</dbReference>
<dbReference type="InterPro" id="IPR017964">
    <property type="entry name" value="DNA-dir_DNA_pol_B_CS"/>
</dbReference>
<dbReference type="InterPro" id="IPR006133">
    <property type="entry name" value="DNA-dir_DNA_pol_B_exonuc"/>
</dbReference>
<dbReference type="InterPro" id="IPR006134">
    <property type="entry name" value="DNA-dir_DNA_pol_B_multi_dom"/>
</dbReference>
<dbReference type="InterPro" id="IPR043502">
    <property type="entry name" value="DNA/RNA_pol_sf"/>
</dbReference>
<dbReference type="InterPro" id="IPR042087">
    <property type="entry name" value="DNA_pol_B_thumb"/>
</dbReference>
<dbReference type="InterPro" id="IPR023211">
    <property type="entry name" value="DNA_pol_palm_dom_sf"/>
</dbReference>
<dbReference type="InterPro" id="IPR050240">
    <property type="entry name" value="DNA_pol_type-B"/>
</dbReference>
<dbReference type="InterPro" id="IPR012337">
    <property type="entry name" value="RNaseH-like_sf"/>
</dbReference>
<dbReference type="InterPro" id="IPR036397">
    <property type="entry name" value="RNaseH_sf"/>
</dbReference>
<dbReference type="NCBIfam" id="TIGR00592">
    <property type="entry name" value="pol2"/>
    <property type="match status" value="2"/>
</dbReference>
<dbReference type="PANTHER" id="PTHR10322">
    <property type="entry name" value="DNA POLYMERASE CATALYTIC SUBUNIT"/>
    <property type="match status" value="1"/>
</dbReference>
<dbReference type="PANTHER" id="PTHR10322:SF23">
    <property type="entry name" value="DNA POLYMERASE DELTA CATALYTIC SUBUNIT"/>
    <property type="match status" value="1"/>
</dbReference>
<dbReference type="Pfam" id="PF00136">
    <property type="entry name" value="DNA_pol_B"/>
    <property type="match status" value="1"/>
</dbReference>
<dbReference type="Pfam" id="PF03104">
    <property type="entry name" value="DNA_pol_B_exo1"/>
    <property type="match status" value="1"/>
</dbReference>
<dbReference type="PRINTS" id="PR00106">
    <property type="entry name" value="DNAPOLB"/>
</dbReference>
<dbReference type="SMART" id="SM00486">
    <property type="entry name" value="POLBc"/>
    <property type="match status" value="1"/>
</dbReference>
<dbReference type="SUPFAM" id="SSF56672">
    <property type="entry name" value="DNA/RNA polymerases"/>
    <property type="match status" value="1"/>
</dbReference>
<dbReference type="SUPFAM" id="SSF53098">
    <property type="entry name" value="Ribonuclease H-like"/>
    <property type="match status" value="1"/>
</dbReference>
<dbReference type="PROSITE" id="PS00116">
    <property type="entry name" value="DNA_POLYMERASE_B"/>
    <property type="match status" value="1"/>
</dbReference>
<keyword id="KW-0235">DNA replication</keyword>
<keyword id="KW-0238">DNA-binding</keyword>
<keyword id="KW-0239">DNA-directed DNA polymerase</keyword>
<keyword id="KW-0255">Endonuclease</keyword>
<keyword id="KW-0378">Hydrolase</keyword>
<keyword id="KW-0540">Nuclease</keyword>
<keyword id="KW-0548">Nucleotidyltransferase</keyword>
<keyword id="KW-0808">Transferase</keyword>
<reference key="1">
    <citation type="submission" date="1999-10" db="EMBL/GenBank/DDBJ databases">
        <title>Thermococcales taxonomy and phylogeny based on the comparative use of 16S rDNA, 16S-23S rDNA intergenic spacer and family B DNA polymerase genes.</title>
        <authorList>
            <person name="Querellou J.J.E."/>
            <person name="Cambon M.A."/>
            <person name="Lesongeur F."/>
            <person name="Forterre P."/>
            <person name="Barbier G."/>
        </authorList>
    </citation>
    <scope>NUCLEOTIDE SEQUENCE [GENOMIC DNA]</scope>
    <source>
        <strain>AL585</strain>
        <strain>AL646</strain>
    </source>
</reference>
<accession>Q9HH06</accession>
<accession>Q9P9K4</accession>
<feature type="chain" id="PRO_0000278147" description="DNA polymerase">
    <location>
        <begin position="1"/>
        <end position="775"/>
    </location>
</feature>
<feature type="sequence variant" description="In strain: AL585.">
    <original>R</original>
    <variation>M</variation>
    <location>
        <position position="430"/>
    </location>
</feature>
<feature type="sequence variant" description="In strain: AL585.">
    <original>K</original>
    <variation>R</variation>
    <location>
        <position position="467"/>
    </location>
</feature>
<feature type="sequence variant" description="In strain: AL585.">
    <original>G</original>
    <variation>E</variation>
    <location>
        <position position="754"/>
    </location>
</feature>
<sequence>MILDADYITEDGKPIIRIFKKENGEFKVEYDRNFRPYIYALLKDDSQIDEVKKITAERHGKIVRIVDVEKVKKKFLGRPIEVWKLYFEHPQDVPAIRDKIREHPAVVDIFEYDIPFAKRYLIDKGLIPMEGDEELKLLAFDIETLYHEGEEFAKGPIIMISYADEEGAKVITWKKVDLPYVEVVSSEREMIKRFLKVIREKDPDVIITYNGDSFDLPYLVKRAEKLGIKLPLGRDGSEPKMQRLGDMTAVEIKGRIHFDLYHVIRRTINLPTYTLEAVYEAIFGKPKEKVYAHEIAEAWETGKGLERVAKYSMEDAKVTYELGREFFPMEAQLSRLVGQPLWDVSRSSTGNLVEWYLLRKAYERNELAPNKPDEREYERRLRESYAGGYVKEPEKGLWEGLVSLDFRSLYPSIIITHNVSPDTLNREGCREYDVAPEVKHKFCKDFPGFIPSLLKRLLDERQEIKRKMKASKDPIEKKMLDYRQRAIKILANSYYGYYGYAKARWYCKECAESVTAWGREYIEFVRKELEEKFGFKVLYIDTDGLYATIPGAKPEEIKRKALEFVEYINAKLPGLLELEYEGFYVRGFFVTKKKYALIDEEGKIITRGLEIVRRDWSEIAKETQAKVLEAILKHGNVEEAVKIVKEVTEKLSKYEIPPEKLVIYEQITRPLHEYKAIGPHVAVAKRLAARGVKVRPGMVIGYIVLRGDGPISKRAILAEEFDPRKHKYDAEYYIENQVLPAVLRILEAFGYRKGDLRWQKTKQTGLTAWLNVKKK</sequence>
<evidence type="ECO:0000250" key="1"/>
<evidence type="ECO:0000305" key="2"/>
<name>DPOL_PYRGL</name>
<protein>
    <recommendedName>
        <fullName>DNA polymerase</fullName>
        <ecNumber>2.7.7.7</ecNumber>
    </recommendedName>
</protein>
<comment type="function">
    <text evidence="1">In addition to polymerase activity, this DNA polymerase exhibits 3' to 5' exonuclease activity.</text>
</comment>
<comment type="catalytic activity">
    <reaction>
        <text>DNA(n) + a 2'-deoxyribonucleoside 5'-triphosphate = DNA(n+1) + diphosphate</text>
        <dbReference type="Rhea" id="RHEA:22508"/>
        <dbReference type="Rhea" id="RHEA-COMP:17339"/>
        <dbReference type="Rhea" id="RHEA-COMP:17340"/>
        <dbReference type="ChEBI" id="CHEBI:33019"/>
        <dbReference type="ChEBI" id="CHEBI:61560"/>
        <dbReference type="ChEBI" id="CHEBI:173112"/>
        <dbReference type="EC" id="2.7.7.7"/>
    </reaction>
</comment>
<comment type="subunit">
    <text evidence="1">Monomer.</text>
</comment>
<comment type="similarity">
    <text evidence="2">Belongs to the DNA polymerase type-B family.</text>
</comment>
<gene>
    <name type="primary">pol</name>
</gene>
<proteinExistence type="inferred from homology"/>
<organism>
    <name type="scientific">Pyrococcus glycovorans</name>
    <dbReference type="NCBI Taxonomy" id="74610"/>
    <lineage>
        <taxon>Archaea</taxon>
        <taxon>Methanobacteriati</taxon>
        <taxon>Methanobacteriota</taxon>
        <taxon>Thermococci</taxon>
        <taxon>Thermococcales</taxon>
        <taxon>Thermococcaceae</taxon>
        <taxon>Pyrococcus</taxon>
    </lineage>
</organism>